<accession>B2AHM5</accession>
<comment type="function">
    <text evidence="1">Catalyzes the condensation of the acetyl group of acetyl-CoA with 3-methyl-2-oxobutanoate (2-ketoisovalerate) to form 3-carboxy-3-hydroxy-4-methylpentanoate (2-isopropylmalate).</text>
</comment>
<comment type="catalytic activity">
    <reaction evidence="1">
        <text>3-methyl-2-oxobutanoate + acetyl-CoA + H2O = (2S)-2-isopropylmalate + CoA + H(+)</text>
        <dbReference type="Rhea" id="RHEA:21524"/>
        <dbReference type="ChEBI" id="CHEBI:1178"/>
        <dbReference type="ChEBI" id="CHEBI:11851"/>
        <dbReference type="ChEBI" id="CHEBI:15377"/>
        <dbReference type="ChEBI" id="CHEBI:15378"/>
        <dbReference type="ChEBI" id="CHEBI:57287"/>
        <dbReference type="ChEBI" id="CHEBI:57288"/>
        <dbReference type="EC" id="2.3.3.13"/>
    </reaction>
</comment>
<comment type="cofactor">
    <cofactor evidence="1">
        <name>Mg(2+)</name>
        <dbReference type="ChEBI" id="CHEBI:18420"/>
    </cofactor>
</comment>
<comment type="pathway">
    <text evidence="1">Amino-acid biosynthesis; L-leucine biosynthesis; L-leucine from 3-methyl-2-oxobutanoate: step 1/4.</text>
</comment>
<comment type="subunit">
    <text evidence="1">Homodimer.</text>
</comment>
<comment type="subcellular location">
    <subcellularLocation>
        <location evidence="1">Cytoplasm</location>
    </subcellularLocation>
</comment>
<comment type="similarity">
    <text evidence="1">Belongs to the alpha-IPM synthase/homocitrate synthase family. LeuA type 2 subfamily.</text>
</comment>
<organism>
    <name type="scientific">Cupriavidus taiwanensis (strain DSM 17343 / BCRC 17206 / CCUG 44338 / CIP 107171 / LMG 19424 / R1)</name>
    <name type="common">Ralstonia taiwanensis (strain LMG 19424)</name>
    <dbReference type="NCBI Taxonomy" id="977880"/>
    <lineage>
        <taxon>Bacteria</taxon>
        <taxon>Pseudomonadati</taxon>
        <taxon>Pseudomonadota</taxon>
        <taxon>Betaproteobacteria</taxon>
        <taxon>Burkholderiales</taxon>
        <taxon>Burkholderiaceae</taxon>
        <taxon>Cupriavidus</taxon>
    </lineage>
</organism>
<reference key="1">
    <citation type="journal article" date="2008" name="Genome Res.">
        <title>Genome sequence of the beta-rhizobium Cupriavidus taiwanensis and comparative genomics of rhizobia.</title>
        <authorList>
            <person name="Amadou C."/>
            <person name="Pascal G."/>
            <person name="Mangenot S."/>
            <person name="Glew M."/>
            <person name="Bontemps C."/>
            <person name="Capela D."/>
            <person name="Carrere S."/>
            <person name="Cruveiller S."/>
            <person name="Dossat C."/>
            <person name="Lajus A."/>
            <person name="Marchetti M."/>
            <person name="Poinsot V."/>
            <person name="Rouy Z."/>
            <person name="Servin B."/>
            <person name="Saad M."/>
            <person name="Schenowitz C."/>
            <person name="Barbe V."/>
            <person name="Batut J."/>
            <person name="Medigue C."/>
            <person name="Masson-Boivin C."/>
        </authorList>
    </citation>
    <scope>NUCLEOTIDE SEQUENCE [LARGE SCALE GENOMIC DNA]</scope>
    <source>
        <strain>DSM 17343 / BCRC 17206 / CCUG 44338 / CIP 107171 / LMG 19424 / R1</strain>
    </source>
</reference>
<name>LEU1_CUPTR</name>
<sequence length="569" mass="62284">MLVNPATKYRPAATVDIPDRTWPGRTITRAPRWMSTDLRDGNQALIEPMNPARKLRLFEQLVKIGLKEIEVAFPAASQTDFDFVRMLIEERRIPDDVTIVVLTQSREDLIRRTVESVRGAARATVHLYNPIAPAWRRIVFNASRDEIKAVAVSGTRLIKALTDAMPETAWTYEYSPETFSLAELDFSLEVSDAVSAAWQAGPGRPMILNLPTTVECSTPNVFADQIEWMHRRLARRAHIVLSVHPHNDRGTAVAAAELALMAGADRVEGCLFGNGERTGNVDLVTLALNLYTQGVAPELDFSDIDAVRQCVEHCNQLPVHPRHPYVGDLVFTAFSGSHQDAIRKGFAQQQPDAIWEVPYLPIDPADLGRSYDAVIRVNSQSGKGGMAYLLEQVHGLYLPRRLQIEFSRAVQAMTDDTGLEASADDLYGLFRREYLARETPLRYVSHQLASDATGATAITVQMERDGQPCTVRGTGNGPIDAFIDALDLPVRVMDYHEHAMTAGADARAACYVEVRVGDSPTGFGAGIDASLVTASLRAVVSGVNRHLQAGFGARAQATQTASASAATEA</sequence>
<gene>
    <name evidence="1" type="primary">leuA</name>
    <name type="ordered locus">RALTA_B0072</name>
</gene>
<dbReference type="EC" id="2.3.3.13" evidence="1"/>
<dbReference type="EMBL" id="CU633750">
    <property type="protein sequence ID" value="CAP63274.1"/>
    <property type="molecule type" value="Genomic_DNA"/>
</dbReference>
<dbReference type="RefSeq" id="WP_012354931.1">
    <property type="nucleotide sequence ID" value="NC_010530.1"/>
</dbReference>
<dbReference type="SMR" id="B2AHM5"/>
<dbReference type="GeneID" id="29765015"/>
<dbReference type="KEGG" id="cti:RALTA_B0072"/>
<dbReference type="eggNOG" id="COG0119">
    <property type="taxonomic scope" value="Bacteria"/>
</dbReference>
<dbReference type="HOGENOM" id="CLU_004588_3_0_4"/>
<dbReference type="BioCyc" id="CTAI977880:RALTA_RS16115-MONOMER"/>
<dbReference type="UniPathway" id="UPA00048">
    <property type="reaction ID" value="UER00070"/>
</dbReference>
<dbReference type="Proteomes" id="UP000001692">
    <property type="component" value="Chromosome 2"/>
</dbReference>
<dbReference type="GO" id="GO:0005737">
    <property type="term" value="C:cytoplasm"/>
    <property type="evidence" value="ECO:0007669"/>
    <property type="project" value="UniProtKB-SubCell"/>
</dbReference>
<dbReference type="GO" id="GO:0003852">
    <property type="term" value="F:2-isopropylmalate synthase activity"/>
    <property type="evidence" value="ECO:0007669"/>
    <property type="project" value="UniProtKB-UniRule"/>
</dbReference>
<dbReference type="GO" id="GO:0003985">
    <property type="term" value="F:acetyl-CoA C-acetyltransferase activity"/>
    <property type="evidence" value="ECO:0007669"/>
    <property type="project" value="UniProtKB-UniRule"/>
</dbReference>
<dbReference type="GO" id="GO:0000287">
    <property type="term" value="F:magnesium ion binding"/>
    <property type="evidence" value="ECO:0007669"/>
    <property type="project" value="UniProtKB-UniRule"/>
</dbReference>
<dbReference type="GO" id="GO:0009098">
    <property type="term" value="P:L-leucine biosynthetic process"/>
    <property type="evidence" value="ECO:0007669"/>
    <property type="project" value="UniProtKB-UniRule"/>
</dbReference>
<dbReference type="CDD" id="cd07942">
    <property type="entry name" value="DRE_TIM_LeuA"/>
    <property type="match status" value="1"/>
</dbReference>
<dbReference type="Gene3D" id="3.30.160.270">
    <property type="match status" value="1"/>
</dbReference>
<dbReference type="Gene3D" id="3.20.20.70">
    <property type="entry name" value="Aldolase class I"/>
    <property type="match status" value="1"/>
</dbReference>
<dbReference type="HAMAP" id="MF_00572">
    <property type="entry name" value="LeuA_type2"/>
    <property type="match status" value="1"/>
</dbReference>
<dbReference type="InterPro" id="IPR013709">
    <property type="entry name" value="2-isopropylmalate_synth_dimer"/>
</dbReference>
<dbReference type="InterPro" id="IPR002034">
    <property type="entry name" value="AIPM/Hcit_synth_CS"/>
</dbReference>
<dbReference type="InterPro" id="IPR013785">
    <property type="entry name" value="Aldolase_TIM"/>
</dbReference>
<dbReference type="InterPro" id="IPR005668">
    <property type="entry name" value="IPM_Synthase"/>
</dbReference>
<dbReference type="InterPro" id="IPR054692">
    <property type="entry name" value="LeuA-like_post-cat"/>
</dbReference>
<dbReference type="InterPro" id="IPR036230">
    <property type="entry name" value="LeuA_allosteric_dom_sf"/>
</dbReference>
<dbReference type="InterPro" id="IPR039371">
    <property type="entry name" value="LeuA_N_DRE-TIM"/>
</dbReference>
<dbReference type="InterPro" id="IPR000891">
    <property type="entry name" value="PYR_CT"/>
</dbReference>
<dbReference type="NCBIfam" id="TIGR00970">
    <property type="entry name" value="leuA_yeast"/>
    <property type="match status" value="1"/>
</dbReference>
<dbReference type="NCBIfam" id="NF002991">
    <property type="entry name" value="PRK03739.1"/>
    <property type="match status" value="1"/>
</dbReference>
<dbReference type="PANTHER" id="PTHR46911">
    <property type="match status" value="1"/>
</dbReference>
<dbReference type="PANTHER" id="PTHR46911:SF1">
    <property type="entry name" value="2-ISOPROPYLMALATE SYNTHASE"/>
    <property type="match status" value="1"/>
</dbReference>
<dbReference type="Pfam" id="PF00682">
    <property type="entry name" value="HMGL-like"/>
    <property type="match status" value="1"/>
</dbReference>
<dbReference type="Pfam" id="PF22615">
    <property type="entry name" value="IPMS_D2"/>
    <property type="match status" value="1"/>
</dbReference>
<dbReference type="Pfam" id="PF08502">
    <property type="entry name" value="LeuA_dimer"/>
    <property type="match status" value="1"/>
</dbReference>
<dbReference type="SMART" id="SM00917">
    <property type="entry name" value="LeuA_dimer"/>
    <property type="match status" value="1"/>
</dbReference>
<dbReference type="SUPFAM" id="SSF110921">
    <property type="entry name" value="2-isopropylmalate synthase LeuA, allosteric (dimerisation) domain"/>
    <property type="match status" value="1"/>
</dbReference>
<dbReference type="SUPFAM" id="SSF51569">
    <property type="entry name" value="Aldolase"/>
    <property type="match status" value="1"/>
</dbReference>
<dbReference type="SUPFAM" id="SSF89000">
    <property type="entry name" value="post-HMGL domain-like"/>
    <property type="match status" value="1"/>
</dbReference>
<dbReference type="PROSITE" id="PS00815">
    <property type="entry name" value="AIPM_HOMOCIT_SYNTH_1"/>
    <property type="match status" value="1"/>
</dbReference>
<dbReference type="PROSITE" id="PS00816">
    <property type="entry name" value="AIPM_HOMOCIT_SYNTH_2"/>
    <property type="match status" value="1"/>
</dbReference>
<dbReference type="PROSITE" id="PS50991">
    <property type="entry name" value="PYR_CT"/>
    <property type="match status" value="1"/>
</dbReference>
<protein>
    <recommendedName>
        <fullName evidence="1">2-isopropylmalate synthase</fullName>
        <ecNumber evidence="1">2.3.3.13</ecNumber>
    </recommendedName>
    <alternativeName>
        <fullName evidence="1">Alpha-IPM synthase</fullName>
    </alternativeName>
    <alternativeName>
        <fullName evidence="1">Alpha-isopropylmalate synthase</fullName>
    </alternativeName>
</protein>
<feature type="chain" id="PRO_1000129504" description="2-isopropylmalate synthase">
    <location>
        <begin position="1"/>
        <end position="569"/>
    </location>
</feature>
<feature type="domain" description="Pyruvate carboxyltransferase" evidence="1">
    <location>
        <begin position="31"/>
        <end position="305"/>
    </location>
</feature>
<feature type="region of interest" description="Regulatory domain" evidence="1">
    <location>
        <begin position="437"/>
        <end position="569"/>
    </location>
</feature>
<feature type="binding site" evidence="1">
    <location>
        <position position="40"/>
    </location>
    <ligand>
        <name>Mg(2+)</name>
        <dbReference type="ChEBI" id="CHEBI:18420"/>
    </ligand>
</feature>
<feature type="binding site" evidence="1">
    <location>
        <position position="244"/>
    </location>
    <ligand>
        <name>Mg(2+)</name>
        <dbReference type="ChEBI" id="CHEBI:18420"/>
    </ligand>
</feature>
<feature type="binding site" evidence="1">
    <location>
        <position position="246"/>
    </location>
    <ligand>
        <name>Mg(2+)</name>
        <dbReference type="ChEBI" id="CHEBI:18420"/>
    </ligand>
</feature>
<feature type="binding site" evidence="1">
    <location>
        <position position="280"/>
    </location>
    <ligand>
        <name>Mg(2+)</name>
        <dbReference type="ChEBI" id="CHEBI:18420"/>
    </ligand>
</feature>
<keyword id="KW-0028">Amino-acid biosynthesis</keyword>
<keyword id="KW-0100">Branched-chain amino acid biosynthesis</keyword>
<keyword id="KW-0963">Cytoplasm</keyword>
<keyword id="KW-0432">Leucine biosynthesis</keyword>
<keyword id="KW-0460">Magnesium</keyword>
<keyword id="KW-0479">Metal-binding</keyword>
<keyword id="KW-0808">Transferase</keyword>
<evidence type="ECO:0000255" key="1">
    <source>
        <dbReference type="HAMAP-Rule" id="MF_00572"/>
    </source>
</evidence>
<proteinExistence type="inferred from homology"/>